<gene>
    <name evidence="1" type="primary">kdpB</name>
    <name type="ordered locus">Lm4b_02654</name>
</gene>
<accession>C1KZN5</accession>
<comment type="function">
    <text evidence="1">Part of the high-affinity ATP-driven potassium transport (or Kdp) system, which catalyzes the hydrolysis of ATP coupled with the electrogenic transport of potassium into the cytoplasm. This subunit is responsible for energy coupling to the transport system and for the release of the potassium ions to the cytoplasm.</text>
</comment>
<comment type="catalytic activity">
    <reaction evidence="1">
        <text>K(+)(out) + ATP + H2O = K(+)(in) + ADP + phosphate + H(+)</text>
        <dbReference type="Rhea" id="RHEA:16777"/>
        <dbReference type="ChEBI" id="CHEBI:15377"/>
        <dbReference type="ChEBI" id="CHEBI:15378"/>
        <dbReference type="ChEBI" id="CHEBI:29103"/>
        <dbReference type="ChEBI" id="CHEBI:30616"/>
        <dbReference type="ChEBI" id="CHEBI:43474"/>
        <dbReference type="ChEBI" id="CHEBI:456216"/>
        <dbReference type="EC" id="7.2.2.6"/>
    </reaction>
    <physiologicalReaction direction="left-to-right" evidence="1">
        <dbReference type="Rhea" id="RHEA:16778"/>
    </physiologicalReaction>
</comment>
<comment type="subunit">
    <text evidence="1">The system is composed of three essential subunits: KdpA, KdpB and KdpC.</text>
</comment>
<comment type="subcellular location">
    <subcellularLocation>
        <location evidence="1">Cell membrane</location>
        <topology evidence="1">Multi-pass membrane protein</topology>
    </subcellularLocation>
</comment>
<comment type="similarity">
    <text evidence="1">Belongs to the cation transport ATPase (P-type) (TC 3.A.3) family. Type IA subfamily.</text>
</comment>
<name>KDPB_LISMC</name>
<proteinExistence type="inferred from homology"/>
<organism>
    <name type="scientific">Listeria monocytogenes serotype 4b (strain CLIP80459)</name>
    <dbReference type="NCBI Taxonomy" id="568819"/>
    <lineage>
        <taxon>Bacteria</taxon>
        <taxon>Bacillati</taxon>
        <taxon>Bacillota</taxon>
        <taxon>Bacilli</taxon>
        <taxon>Bacillales</taxon>
        <taxon>Listeriaceae</taxon>
        <taxon>Listeria</taxon>
    </lineage>
</organism>
<feature type="chain" id="PRO_1000204851" description="Potassium-transporting ATPase ATP-binding subunit">
    <location>
        <begin position="1"/>
        <end position="681"/>
    </location>
</feature>
<feature type="transmembrane region" description="Helical" evidence="1">
    <location>
        <begin position="30"/>
        <end position="50"/>
    </location>
</feature>
<feature type="transmembrane region" description="Helical" evidence="1">
    <location>
        <begin position="59"/>
        <end position="79"/>
    </location>
</feature>
<feature type="transmembrane region" description="Helical" evidence="1">
    <location>
        <begin position="216"/>
        <end position="236"/>
    </location>
</feature>
<feature type="transmembrane region" description="Helical" evidence="1">
    <location>
        <begin position="255"/>
        <end position="275"/>
    </location>
</feature>
<feature type="transmembrane region" description="Helical" evidence="1">
    <location>
        <begin position="587"/>
        <end position="607"/>
    </location>
</feature>
<feature type="transmembrane region" description="Helical" evidence="1">
    <location>
        <begin position="615"/>
        <end position="635"/>
    </location>
</feature>
<feature type="transmembrane region" description="Helical" evidence="1">
    <location>
        <begin position="661"/>
        <end position="681"/>
    </location>
</feature>
<feature type="active site" description="4-aspartylphosphate intermediate" evidence="1">
    <location>
        <position position="306"/>
    </location>
</feature>
<feature type="binding site" evidence="1">
    <location>
        <position position="343"/>
    </location>
    <ligand>
        <name>ATP</name>
        <dbReference type="ChEBI" id="CHEBI:30616"/>
    </ligand>
</feature>
<feature type="binding site" evidence="1">
    <location>
        <position position="347"/>
    </location>
    <ligand>
        <name>ATP</name>
        <dbReference type="ChEBI" id="CHEBI:30616"/>
    </ligand>
</feature>
<feature type="binding site" evidence="1">
    <location>
        <begin position="376"/>
        <end position="383"/>
    </location>
    <ligand>
        <name>ATP</name>
        <dbReference type="ChEBI" id="CHEBI:30616"/>
    </ligand>
</feature>
<feature type="binding site" evidence="1">
    <location>
        <position position="394"/>
    </location>
    <ligand>
        <name>ATP</name>
        <dbReference type="ChEBI" id="CHEBI:30616"/>
    </ligand>
</feature>
<feature type="binding site" evidence="1">
    <location>
        <position position="517"/>
    </location>
    <ligand>
        <name>Mg(2+)</name>
        <dbReference type="ChEBI" id="CHEBI:18420"/>
    </ligand>
</feature>
<feature type="binding site" evidence="1">
    <location>
        <position position="521"/>
    </location>
    <ligand>
        <name>Mg(2+)</name>
        <dbReference type="ChEBI" id="CHEBI:18420"/>
    </ligand>
</feature>
<reference key="1">
    <citation type="journal article" date="2012" name="BMC Genomics">
        <title>Comparative genomics and transcriptomics of lineages I, II, and III strains of Listeria monocytogenes.</title>
        <authorList>
            <person name="Hain T."/>
            <person name="Ghai R."/>
            <person name="Billion A."/>
            <person name="Kuenne C.T."/>
            <person name="Steinweg C."/>
            <person name="Izar B."/>
            <person name="Mohamed W."/>
            <person name="Mraheil M."/>
            <person name="Domann E."/>
            <person name="Schaffrath S."/>
            <person name="Karst U."/>
            <person name="Goesmann A."/>
            <person name="Oehm S."/>
            <person name="Puhler A."/>
            <person name="Merkl R."/>
            <person name="Vorwerk S."/>
            <person name="Glaser P."/>
            <person name="Garrido P."/>
            <person name="Rusniok C."/>
            <person name="Buchrieser C."/>
            <person name="Goebel W."/>
            <person name="Chakraborty T."/>
        </authorList>
    </citation>
    <scope>NUCLEOTIDE SEQUENCE [LARGE SCALE GENOMIC DNA]</scope>
    <source>
        <strain>CLIP80459</strain>
    </source>
</reference>
<protein>
    <recommendedName>
        <fullName evidence="1">Potassium-transporting ATPase ATP-binding subunit</fullName>
        <ecNumber evidence="1">7.2.2.6</ecNumber>
    </recommendedName>
    <alternativeName>
        <fullName evidence="1">ATP phosphohydrolase [potassium-transporting] B chain</fullName>
    </alternativeName>
    <alternativeName>
        <fullName evidence="1">Potassium-binding and translocating subunit B</fullName>
    </alternativeName>
    <alternativeName>
        <fullName evidence="1">Potassium-translocating ATPase B chain</fullName>
    </alternativeName>
</protein>
<keyword id="KW-0067">ATP-binding</keyword>
<keyword id="KW-1003">Cell membrane</keyword>
<keyword id="KW-0406">Ion transport</keyword>
<keyword id="KW-0460">Magnesium</keyword>
<keyword id="KW-0472">Membrane</keyword>
<keyword id="KW-0479">Metal-binding</keyword>
<keyword id="KW-0547">Nucleotide-binding</keyword>
<keyword id="KW-0597">Phosphoprotein</keyword>
<keyword id="KW-0630">Potassium</keyword>
<keyword id="KW-0633">Potassium transport</keyword>
<keyword id="KW-1278">Translocase</keyword>
<keyword id="KW-0812">Transmembrane</keyword>
<keyword id="KW-1133">Transmembrane helix</keyword>
<keyword id="KW-0813">Transport</keyword>
<sequence length="681" mass="72368">MMEKGIWKDALIQSTKKLSPKLQVKNPVMLLVYVGAILATSLYFLGFFGISDEKSGYTLAIALILWFTVLFANFAEAIAEGRGRAQADSLKMARKDVLARKLKNIDDKTDVIEIASNDLKKGDIVYVLANEQIPMDGEVIEGAASVDESAITGESAPVIRESGGDRSAVTGGTTLVSDWLVVRVTAVSGESFLDKMIAMVEGASRKKTPNEIALQILLVTLSIIFLAVSATLLPFTEFASKQAGAGSAISITNVIALLVCLAPTTIGALLSSIGIAGMSRLNQANVLAMSGRAIEAAGDVDVLLLDKTGTITLGNRKASEFLPVDGVTEQELADAAQLSSIADETAEGRSIVVLAKERFDIRGRDFAEMHAEFVPFTATTRMSGIDYQENTIRKGAADAVRAYVTANGGTYPKECDAIVSKVAGAGGTPLVVVRNNKVLGVIYLKDIVKNGVKERFLDLRKMGIKTIMITGDNPMTAAAIAAEAGVDDFLAEATPEAKLELIREYQREGHLVAMTGDGTNDAPALAQADVAVAMNTGTQAAKEAGNMVDLDSSPTKLIDIVRIGKQLLMTRGALTTFSVANDLAKYFAIIPVLFYGIFPQLEALNLMGLTSPTSAILSAIIYNAVIIIILIPLSLKGVKYREMPAGKLLSRNMLIYGLGGLIAPFIAIKLIDMLLTVLGIV</sequence>
<dbReference type="EC" id="7.2.2.6" evidence="1"/>
<dbReference type="EMBL" id="FM242711">
    <property type="protein sequence ID" value="CAS06408.1"/>
    <property type="molecule type" value="Genomic_DNA"/>
</dbReference>
<dbReference type="RefSeq" id="WP_003727672.1">
    <property type="nucleotide sequence ID" value="NC_012488.1"/>
</dbReference>
<dbReference type="SMR" id="C1KZN5"/>
<dbReference type="KEGG" id="lmc:Lm4b_02654"/>
<dbReference type="HOGENOM" id="CLU_025728_2_0_9"/>
<dbReference type="GO" id="GO:0005886">
    <property type="term" value="C:plasma membrane"/>
    <property type="evidence" value="ECO:0007669"/>
    <property type="project" value="UniProtKB-SubCell"/>
</dbReference>
<dbReference type="GO" id="GO:0005524">
    <property type="term" value="F:ATP binding"/>
    <property type="evidence" value="ECO:0007669"/>
    <property type="project" value="UniProtKB-UniRule"/>
</dbReference>
<dbReference type="GO" id="GO:0016887">
    <property type="term" value="F:ATP hydrolysis activity"/>
    <property type="evidence" value="ECO:0007669"/>
    <property type="project" value="InterPro"/>
</dbReference>
<dbReference type="GO" id="GO:0000287">
    <property type="term" value="F:magnesium ion binding"/>
    <property type="evidence" value="ECO:0007669"/>
    <property type="project" value="UniProtKB-UniRule"/>
</dbReference>
<dbReference type="GO" id="GO:0008556">
    <property type="term" value="F:P-type potassium transmembrane transporter activity"/>
    <property type="evidence" value="ECO:0007669"/>
    <property type="project" value="UniProtKB-UniRule"/>
</dbReference>
<dbReference type="CDD" id="cd02078">
    <property type="entry name" value="P-type_ATPase_K"/>
    <property type="match status" value="1"/>
</dbReference>
<dbReference type="FunFam" id="2.70.150.10:FF:000010">
    <property type="entry name" value="Potassium-transporting ATPase ATP-binding subunit"/>
    <property type="match status" value="1"/>
</dbReference>
<dbReference type="FunFam" id="3.40.1110.10:FF:000007">
    <property type="entry name" value="Potassium-transporting ATPase ATP-binding subunit"/>
    <property type="match status" value="1"/>
</dbReference>
<dbReference type="Gene3D" id="3.40.1110.10">
    <property type="entry name" value="Calcium-transporting ATPase, cytoplasmic domain N"/>
    <property type="match status" value="1"/>
</dbReference>
<dbReference type="Gene3D" id="2.70.150.10">
    <property type="entry name" value="Calcium-transporting ATPase, cytoplasmic transduction domain A"/>
    <property type="match status" value="1"/>
</dbReference>
<dbReference type="Gene3D" id="3.40.50.1000">
    <property type="entry name" value="HAD superfamily/HAD-like"/>
    <property type="match status" value="1"/>
</dbReference>
<dbReference type="HAMAP" id="MF_00285">
    <property type="entry name" value="KdpB"/>
    <property type="match status" value="1"/>
</dbReference>
<dbReference type="InterPro" id="IPR023299">
    <property type="entry name" value="ATPase_P-typ_cyto_dom_N"/>
</dbReference>
<dbReference type="InterPro" id="IPR018303">
    <property type="entry name" value="ATPase_P-typ_P_site"/>
</dbReference>
<dbReference type="InterPro" id="IPR023298">
    <property type="entry name" value="ATPase_P-typ_TM_dom_sf"/>
</dbReference>
<dbReference type="InterPro" id="IPR008250">
    <property type="entry name" value="ATPase_P-typ_transduc_dom_A_sf"/>
</dbReference>
<dbReference type="InterPro" id="IPR036412">
    <property type="entry name" value="HAD-like_sf"/>
</dbReference>
<dbReference type="InterPro" id="IPR023214">
    <property type="entry name" value="HAD_sf"/>
</dbReference>
<dbReference type="InterPro" id="IPR006391">
    <property type="entry name" value="P-type_ATPase_bsu_IA"/>
</dbReference>
<dbReference type="InterPro" id="IPR001757">
    <property type="entry name" value="P_typ_ATPase"/>
</dbReference>
<dbReference type="InterPro" id="IPR044492">
    <property type="entry name" value="P_typ_ATPase_HD_dom"/>
</dbReference>
<dbReference type="NCBIfam" id="TIGR01494">
    <property type="entry name" value="ATPase_P-type"/>
    <property type="match status" value="2"/>
</dbReference>
<dbReference type="NCBIfam" id="TIGR01497">
    <property type="entry name" value="kdpB"/>
    <property type="match status" value="1"/>
</dbReference>
<dbReference type="PANTHER" id="PTHR43743">
    <property type="entry name" value="POTASSIUM-TRANSPORTING ATPASE ATP-BINDING SUBUNIT"/>
    <property type="match status" value="1"/>
</dbReference>
<dbReference type="PANTHER" id="PTHR43743:SF1">
    <property type="entry name" value="POTASSIUM-TRANSPORTING ATPASE ATP-BINDING SUBUNIT"/>
    <property type="match status" value="1"/>
</dbReference>
<dbReference type="Pfam" id="PF00122">
    <property type="entry name" value="E1-E2_ATPase"/>
    <property type="match status" value="1"/>
</dbReference>
<dbReference type="Pfam" id="PF00702">
    <property type="entry name" value="Hydrolase"/>
    <property type="match status" value="1"/>
</dbReference>
<dbReference type="PRINTS" id="PR00119">
    <property type="entry name" value="CATATPASE"/>
</dbReference>
<dbReference type="PRINTS" id="PR00120">
    <property type="entry name" value="HATPASE"/>
</dbReference>
<dbReference type="SFLD" id="SFLDS00003">
    <property type="entry name" value="Haloacid_Dehalogenase"/>
    <property type="match status" value="1"/>
</dbReference>
<dbReference type="SFLD" id="SFLDF00027">
    <property type="entry name" value="p-type_atpase"/>
    <property type="match status" value="1"/>
</dbReference>
<dbReference type="SUPFAM" id="SSF81653">
    <property type="entry name" value="Calcium ATPase, transduction domain A"/>
    <property type="match status" value="1"/>
</dbReference>
<dbReference type="SUPFAM" id="SSF81665">
    <property type="entry name" value="Calcium ATPase, transmembrane domain M"/>
    <property type="match status" value="1"/>
</dbReference>
<dbReference type="SUPFAM" id="SSF56784">
    <property type="entry name" value="HAD-like"/>
    <property type="match status" value="1"/>
</dbReference>
<dbReference type="SUPFAM" id="SSF81660">
    <property type="entry name" value="Metal cation-transporting ATPase, ATP-binding domain N"/>
    <property type="match status" value="1"/>
</dbReference>
<dbReference type="PROSITE" id="PS00154">
    <property type="entry name" value="ATPASE_E1_E2"/>
    <property type="match status" value="1"/>
</dbReference>
<evidence type="ECO:0000255" key="1">
    <source>
        <dbReference type="HAMAP-Rule" id="MF_00285"/>
    </source>
</evidence>